<proteinExistence type="predicted"/>
<keyword id="KW-1003">Cell membrane</keyword>
<keyword id="KW-0472">Membrane</keyword>
<keyword id="KW-1185">Reference proteome</keyword>
<keyword id="KW-0812">Transmembrane</keyword>
<keyword id="KW-1133">Transmembrane helix</keyword>
<name>MAUF_METFK</name>
<feature type="chain" id="PRO_0000208938" description="Methylamine utilization protein MauF">
    <location>
        <begin position="1"/>
        <end position="283"/>
    </location>
</feature>
<feature type="transmembrane region" description="Helical" evidence="1">
    <location>
        <begin position="37"/>
        <end position="57"/>
    </location>
</feature>
<feature type="transmembrane region" description="Helical" evidence="1">
    <location>
        <begin position="58"/>
        <end position="78"/>
    </location>
</feature>
<feature type="transmembrane region" description="Helical" evidence="1">
    <location>
        <begin position="116"/>
        <end position="136"/>
    </location>
</feature>
<feature type="transmembrane region" description="Helical" evidence="1">
    <location>
        <begin position="143"/>
        <end position="163"/>
    </location>
</feature>
<feature type="transmembrane region" description="Helical" evidence="1">
    <location>
        <begin position="187"/>
        <end position="207"/>
    </location>
</feature>
<feature type="transmembrane region" description="Helical" evidence="1">
    <location>
        <begin position="210"/>
        <end position="230"/>
    </location>
</feature>
<feature type="transmembrane region" description="Helical" evidence="1">
    <location>
        <begin position="263"/>
        <end position="283"/>
    </location>
</feature>
<feature type="sequence conflict" description="In Ref. 2." evidence="2" ref="2">
    <original>M</original>
    <variation>I</variation>
    <location>
        <position position="279"/>
    </location>
</feature>
<comment type="pathway">
    <text>One-carbon metabolism; methylamine degradation.</text>
</comment>
<comment type="subcellular location">
    <subcellularLocation>
        <location evidence="2">Cell membrane</location>
        <topology evidence="2">Multi-pass membrane protein</topology>
    </subcellularLocation>
</comment>
<comment type="sequence caution" evidence="2">
    <conflict type="erroneous initiation">
        <sequence resource="EMBL-CDS" id="ABE48817"/>
    </conflict>
</comment>
<gene>
    <name type="primary">mauF</name>
    <name type="ordered locus">Mfla_0547</name>
</gene>
<protein>
    <recommendedName>
        <fullName>Methylamine utilization protein MauF</fullName>
    </recommendedName>
</protein>
<dbReference type="EMBL" id="CP000284">
    <property type="protein sequence ID" value="ABE48817.1"/>
    <property type="status" value="ALT_INIT"/>
    <property type="molecule type" value="Genomic_DNA"/>
</dbReference>
<dbReference type="EMBL" id="L37428">
    <property type="protein sequence ID" value="AAC41467.1"/>
    <property type="molecule type" value="Genomic_DNA"/>
</dbReference>
<dbReference type="EMBL" id="AF188997">
    <property type="protein sequence ID" value="AAC41468.1"/>
    <property type="molecule type" value="Genomic_DNA"/>
</dbReference>
<dbReference type="RefSeq" id="WP_229407143.1">
    <property type="nucleotide sequence ID" value="NC_007947.1"/>
</dbReference>
<dbReference type="STRING" id="265072.Mfla_0547"/>
<dbReference type="KEGG" id="mfa:Mfla_0547"/>
<dbReference type="eggNOG" id="COG0785">
    <property type="taxonomic scope" value="Bacteria"/>
</dbReference>
<dbReference type="HOGENOM" id="CLU_059532_0_0_4"/>
<dbReference type="UniPathway" id="UPA00895"/>
<dbReference type="Proteomes" id="UP000002440">
    <property type="component" value="Chromosome"/>
</dbReference>
<dbReference type="GO" id="GO:0005886">
    <property type="term" value="C:plasma membrane"/>
    <property type="evidence" value="ECO:0007669"/>
    <property type="project" value="UniProtKB-SubCell"/>
</dbReference>
<sequence>MSIDAKLSRQASGSKAGVACVPDAYSFSEARSPGTRFALMLSAVAAGLAGGAMLHSAMSATSALTGLFIVLALAGGFLSTWSPCGYSSLSLLRPAGRYSFASVLRWSPTFFTHALGYAIGAVVLGGALGMAGWLLFSSLPFSYMVAGMAVLALGYGAHQFGFMKMPYPQRRAQVPHDARFRFRSSVIGLLYGYALGMNYLTYVQTPILYIVTGVALFCGDVKTAIVIIGIFNIGRCLPVAVNFLPVKNVTVQVWLARWQERAVEVDGFLLLSVGSAALMLLVL</sequence>
<reference key="1">
    <citation type="submission" date="2006-03" db="EMBL/GenBank/DDBJ databases">
        <title>Complete sequence of Methylobacillus flagellatus KT.</title>
        <authorList>
            <consortium name="US DOE Joint Genome Institute"/>
            <person name="Copeland A."/>
            <person name="Lucas S."/>
            <person name="Lapidus A."/>
            <person name="Barry K."/>
            <person name="Detter J.C."/>
            <person name="Glavina del Rio T."/>
            <person name="Hammon N."/>
            <person name="Israni S."/>
            <person name="Dalin E."/>
            <person name="Tice H."/>
            <person name="Pitluck S."/>
            <person name="Brettin T."/>
            <person name="Bruce D."/>
            <person name="Han C."/>
            <person name="Tapia R."/>
            <person name="Saunders E."/>
            <person name="Gilna P."/>
            <person name="Schmutz J."/>
            <person name="Larimer F."/>
            <person name="Land M."/>
            <person name="Kyrpides N."/>
            <person name="Anderson I."/>
            <person name="Richardson P."/>
        </authorList>
    </citation>
    <scope>NUCLEOTIDE SEQUENCE [LARGE SCALE GENOMIC DNA]</scope>
    <source>
        <strain>ATCC 51484 / DSM 6875 / VKM B-1610 / KT</strain>
    </source>
</reference>
<reference key="2">
    <citation type="journal article" date="1995" name="J. Bacteriol.">
        <title>Cloning, sequencing, and mutation of a gene for azurin in Methylobacillus flagellatum KT.</title>
        <authorList>
            <person name="Gak E.R."/>
            <person name="Chistoserdov A.Y."/>
            <person name="Lidstrom M.E."/>
        </authorList>
    </citation>
    <scope>NUCLEOTIDE SEQUENCE [GENOMIC DNA] OF 1-114 AND 250-279</scope>
</reference>
<evidence type="ECO:0000255" key="1"/>
<evidence type="ECO:0000305" key="2"/>
<accession>Q50418</accession>
<accession>Q1H3X0</accession>
<accession>Q50419</accession>
<organism>
    <name type="scientific">Methylobacillus flagellatus (strain ATCC 51484 / DSM 6875 / VKM B-1610 / KT)</name>
    <dbReference type="NCBI Taxonomy" id="265072"/>
    <lineage>
        <taxon>Bacteria</taxon>
        <taxon>Pseudomonadati</taxon>
        <taxon>Pseudomonadota</taxon>
        <taxon>Betaproteobacteria</taxon>
        <taxon>Nitrosomonadales</taxon>
        <taxon>Methylophilaceae</taxon>
        <taxon>Methylobacillus</taxon>
    </lineage>
</organism>